<feature type="chain" id="PRO_1000131271" description="PqqA peptide cyclase">
    <location>
        <begin position="1"/>
        <end position="384"/>
    </location>
</feature>
<feature type="domain" description="Radical SAM core" evidence="2">
    <location>
        <begin position="5"/>
        <end position="220"/>
    </location>
</feature>
<feature type="binding site" evidence="1">
    <location>
        <position position="19"/>
    </location>
    <ligand>
        <name>[4Fe-4S] cluster</name>
        <dbReference type="ChEBI" id="CHEBI:49883"/>
        <note>4Fe-4S-S-AdoMet</note>
    </ligand>
</feature>
<feature type="binding site" evidence="1">
    <location>
        <position position="23"/>
    </location>
    <ligand>
        <name>[4Fe-4S] cluster</name>
        <dbReference type="ChEBI" id="CHEBI:49883"/>
        <note>4Fe-4S-S-AdoMet</note>
    </ligand>
</feature>
<feature type="binding site" evidence="1">
    <location>
        <position position="26"/>
    </location>
    <ligand>
        <name>[4Fe-4S] cluster</name>
        <dbReference type="ChEBI" id="CHEBI:49883"/>
        <note>4Fe-4S-S-AdoMet</note>
    </ligand>
</feature>
<organism>
    <name type="scientific">Acinetobacter baumannii (strain AB0057)</name>
    <dbReference type="NCBI Taxonomy" id="480119"/>
    <lineage>
        <taxon>Bacteria</taxon>
        <taxon>Pseudomonadati</taxon>
        <taxon>Pseudomonadota</taxon>
        <taxon>Gammaproteobacteria</taxon>
        <taxon>Moraxellales</taxon>
        <taxon>Moraxellaceae</taxon>
        <taxon>Acinetobacter</taxon>
        <taxon>Acinetobacter calcoaceticus/baumannii complex</taxon>
    </lineage>
</organism>
<dbReference type="EC" id="1.21.98.4" evidence="1"/>
<dbReference type="EMBL" id="CP001182">
    <property type="protein sequence ID" value="ACJ41365.1"/>
    <property type="molecule type" value="Genomic_DNA"/>
</dbReference>
<dbReference type="RefSeq" id="WP_000134724.1">
    <property type="nucleotide sequence ID" value="NC_011586.2"/>
</dbReference>
<dbReference type="SMR" id="B7I6M8"/>
<dbReference type="KEGG" id="abn:AB57_1992"/>
<dbReference type="HOGENOM" id="CLU_009273_4_7_6"/>
<dbReference type="UniPathway" id="UPA00539"/>
<dbReference type="Proteomes" id="UP000007094">
    <property type="component" value="Chromosome"/>
</dbReference>
<dbReference type="GO" id="GO:0051539">
    <property type="term" value="F:4 iron, 4 sulfur cluster binding"/>
    <property type="evidence" value="ECO:0007669"/>
    <property type="project" value="UniProtKB-KW"/>
</dbReference>
<dbReference type="GO" id="GO:0009975">
    <property type="term" value="F:cyclase activity"/>
    <property type="evidence" value="ECO:0007669"/>
    <property type="project" value="UniProtKB-UniRule"/>
</dbReference>
<dbReference type="GO" id="GO:0005506">
    <property type="term" value="F:iron ion binding"/>
    <property type="evidence" value="ECO:0007669"/>
    <property type="project" value="UniProtKB-UniRule"/>
</dbReference>
<dbReference type="GO" id="GO:0016491">
    <property type="term" value="F:oxidoreductase activity"/>
    <property type="evidence" value="ECO:0007669"/>
    <property type="project" value="UniProtKB-KW"/>
</dbReference>
<dbReference type="GO" id="GO:1904047">
    <property type="term" value="F:S-adenosyl-L-methionine binding"/>
    <property type="evidence" value="ECO:0007669"/>
    <property type="project" value="UniProtKB-UniRule"/>
</dbReference>
<dbReference type="GO" id="GO:0018189">
    <property type="term" value="P:pyrroloquinoline quinone biosynthetic process"/>
    <property type="evidence" value="ECO:0007669"/>
    <property type="project" value="UniProtKB-UniRule"/>
</dbReference>
<dbReference type="CDD" id="cd01335">
    <property type="entry name" value="Radical_SAM"/>
    <property type="match status" value="1"/>
</dbReference>
<dbReference type="CDD" id="cd21119">
    <property type="entry name" value="SPASM_PqqE"/>
    <property type="match status" value="1"/>
</dbReference>
<dbReference type="Gene3D" id="3.20.20.70">
    <property type="entry name" value="Aldolase class I"/>
    <property type="match status" value="1"/>
</dbReference>
<dbReference type="HAMAP" id="MF_00660">
    <property type="entry name" value="PqqE"/>
    <property type="match status" value="1"/>
</dbReference>
<dbReference type="InterPro" id="IPR023885">
    <property type="entry name" value="4Fe4S-binding_SPASM_dom"/>
</dbReference>
<dbReference type="InterPro" id="IPR013785">
    <property type="entry name" value="Aldolase_TIM"/>
</dbReference>
<dbReference type="InterPro" id="IPR006638">
    <property type="entry name" value="Elp3/MiaA/NifB-like_rSAM"/>
</dbReference>
<dbReference type="InterPro" id="IPR000385">
    <property type="entry name" value="MoaA_NifB_PqqE_Fe-S-bd_CS"/>
</dbReference>
<dbReference type="InterPro" id="IPR011843">
    <property type="entry name" value="PQQ_synth_PqqE_bac"/>
</dbReference>
<dbReference type="InterPro" id="IPR017200">
    <property type="entry name" value="PqqE-like"/>
</dbReference>
<dbReference type="InterPro" id="IPR050377">
    <property type="entry name" value="Radical_SAM_PqqE_MftC-like"/>
</dbReference>
<dbReference type="InterPro" id="IPR007197">
    <property type="entry name" value="rSAM"/>
</dbReference>
<dbReference type="NCBIfam" id="TIGR02109">
    <property type="entry name" value="PQQ_syn_pqqE"/>
    <property type="match status" value="1"/>
</dbReference>
<dbReference type="NCBIfam" id="TIGR04085">
    <property type="entry name" value="rSAM_more_4Fe4S"/>
    <property type="match status" value="1"/>
</dbReference>
<dbReference type="PANTHER" id="PTHR11228:SF7">
    <property type="entry name" value="PQQA PEPTIDE CYCLASE"/>
    <property type="match status" value="1"/>
</dbReference>
<dbReference type="PANTHER" id="PTHR11228">
    <property type="entry name" value="RADICAL SAM DOMAIN PROTEIN"/>
    <property type="match status" value="1"/>
</dbReference>
<dbReference type="Pfam" id="PF13353">
    <property type="entry name" value="Fer4_12"/>
    <property type="match status" value="1"/>
</dbReference>
<dbReference type="Pfam" id="PF04055">
    <property type="entry name" value="Radical_SAM"/>
    <property type="match status" value="1"/>
</dbReference>
<dbReference type="Pfam" id="PF13186">
    <property type="entry name" value="SPASM"/>
    <property type="match status" value="1"/>
</dbReference>
<dbReference type="PIRSF" id="PIRSF037420">
    <property type="entry name" value="PQQ_syn_pqqE"/>
    <property type="match status" value="1"/>
</dbReference>
<dbReference type="SFLD" id="SFLDF00280">
    <property type="entry name" value="coenzyme_PQQ_synthesis_protein"/>
    <property type="match status" value="1"/>
</dbReference>
<dbReference type="SFLD" id="SFLDS00029">
    <property type="entry name" value="Radical_SAM"/>
    <property type="match status" value="1"/>
</dbReference>
<dbReference type="SMART" id="SM00729">
    <property type="entry name" value="Elp3"/>
    <property type="match status" value="1"/>
</dbReference>
<dbReference type="SUPFAM" id="SSF102114">
    <property type="entry name" value="Radical SAM enzymes"/>
    <property type="match status" value="1"/>
</dbReference>
<dbReference type="PROSITE" id="PS01305">
    <property type="entry name" value="MOAA_NIFB_PQQE"/>
    <property type="match status" value="1"/>
</dbReference>
<dbReference type="PROSITE" id="PS51918">
    <property type="entry name" value="RADICAL_SAM"/>
    <property type="match status" value="1"/>
</dbReference>
<keyword id="KW-0004">4Fe-4S</keyword>
<keyword id="KW-0408">Iron</keyword>
<keyword id="KW-0411">Iron-sulfur</keyword>
<keyword id="KW-0479">Metal-binding</keyword>
<keyword id="KW-0560">Oxidoreductase</keyword>
<keyword id="KW-0884">PQQ biosynthesis</keyword>
<keyword id="KW-0949">S-adenosyl-L-methionine</keyword>
<sequence>MTEGVGLPLWLLAELTYRCPLQCPYCSNPLDYAQHKNELTTQEWFDVFDQARQMGAVQLGFSGGEPLVRQDLEQLVAHAHQLGFYTNLITSGMGLTEQRISHLKQAGLDHIQISFQASDPVVNDALAGSKHAFEQKYEMCRLVKKYDYPMVLNFVIHRHNIDQIDKIIELCLELNADTVELAICQFYGWAFLNRQGLLPTQEQLIRAERITNEYREKLKAQNHPCKLIFVVPDYYEERPKACMNGWGKIFFTVAPDGMALPCHAARQLPISFPNVREQSLSRIWYESTGFNHFRGDAWMPEGCRSCPDKDRDFGGCRCQAYMLTGNASNADPVCGKSPYHQFIEQARAESEIDSSLEKLVFRNSRNSKQFTVQQNIPVQNIVDD</sequence>
<accession>B7I6M8</accession>
<evidence type="ECO:0000255" key="1">
    <source>
        <dbReference type="HAMAP-Rule" id="MF_00660"/>
    </source>
</evidence>
<evidence type="ECO:0000255" key="2">
    <source>
        <dbReference type="PROSITE-ProRule" id="PRU01266"/>
    </source>
</evidence>
<comment type="function">
    <text evidence="1">Catalyzes the cross-linking of a glutamate residue and a tyrosine residue in the PqqA protein as part of the biosynthesis of pyrroloquinoline quinone (PQQ).</text>
</comment>
<comment type="catalytic activity">
    <reaction evidence="1">
        <text>[PQQ precursor protein] + S-adenosyl-L-methionine = E-Y cross-linked-[PQQ precursor protein] + 5'-deoxyadenosine + L-methionine + H(+)</text>
        <dbReference type="Rhea" id="RHEA:56836"/>
        <dbReference type="Rhea" id="RHEA-COMP:14800"/>
        <dbReference type="Rhea" id="RHEA-COMP:14801"/>
        <dbReference type="ChEBI" id="CHEBI:15378"/>
        <dbReference type="ChEBI" id="CHEBI:17319"/>
        <dbReference type="ChEBI" id="CHEBI:57844"/>
        <dbReference type="ChEBI" id="CHEBI:59789"/>
        <dbReference type="ChEBI" id="CHEBI:141026"/>
        <dbReference type="ChEBI" id="CHEBI:141027"/>
        <dbReference type="EC" id="1.21.98.4"/>
    </reaction>
</comment>
<comment type="cofactor">
    <cofactor evidence="1">
        <name>[4Fe-4S] cluster</name>
        <dbReference type="ChEBI" id="CHEBI:49883"/>
    </cofactor>
    <text evidence="1">Binds 1 [4Fe-4S] cluster. The cluster is coordinated with 3 cysteines and an exchangeable S-adenosyl-L-methionine.</text>
</comment>
<comment type="pathway">
    <text evidence="1">Cofactor biosynthesis; pyrroloquinoline quinone biosynthesis.</text>
</comment>
<comment type="subunit">
    <text evidence="1">Interacts with PqqD. The interaction is necessary for activity of PqqE.</text>
</comment>
<comment type="similarity">
    <text evidence="1">Belongs to the radical SAM superfamily. PqqE family.</text>
</comment>
<proteinExistence type="inferred from homology"/>
<gene>
    <name evidence="1" type="primary">pqqE</name>
    <name type="ordered locus">AB57_1992</name>
</gene>
<name>PQQE_ACIB5</name>
<reference key="1">
    <citation type="journal article" date="2008" name="J. Bacteriol.">
        <title>Comparative genome sequence analysis of multidrug-resistant Acinetobacter baumannii.</title>
        <authorList>
            <person name="Adams M.D."/>
            <person name="Goglin K."/>
            <person name="Molyneaux N."/>
            <person name="Hujer K.M."/>
            <person name="Lavender H."/>
            <person name="Jamison J.J."/>
            <person name="MacDonald I.J."/>
            <person name="Martin K.M."/>
            <person name="Russo T."/>
            <person name="Campagnari A.A."/>
            <person name="Hujer A.M."/>
            <person name="Bonomo R.A."/>
            <person name="Gill S.R."/>
        </authorList>
    </citation>
    <scope>NUCLEOTIDE SEQUENCE [LARGE SCALE GENOMIC DNA]</scope>
    <source>
        <strain>AB0057</strain>
    </source>
</reference>
<protein>
    <recommendedName>
        <fullName evidence="1">PqqA peptide cyclase</fullName>
        <ecNumber evidence="1">1.21.98.4</ecNumber>
    </recommendedName>
    <alternativeName>
        <fullName evidence="1">Coenzyme PQQ synthesis protein E</fullName>
    </alternativeName>
    <alternativeName>
        <fullName evidence="1">Pyrroloquinoline quinone biosynthesis protein E</fullName>
    </alternativeName>
</protein>